<evidence type="ECO:0000255" key="1">
    <source>
        <dbReference type="HAMAP-Rule" id="MF_00064"/>
    </source>
</evidence>
<evidence type="ECO:0000256" key="2">
    <source>
        <dbReference type="SAM" id="MobiDB-lite"/>
    </source>
</evidence>
<gene>
    <name evidence="1" type="primary">cysD</name>
    <name type="ordered locus">Sbal195_0962</name>
</gene>
<protein>
    <recommendedName>
        <fullName evidence="1">Sulfate adenylyltransferase subunit 2</fullName>
        <ecNumber evidence="1">2.7.7.4</ecNumber>
    </recommendedName>
    <alternativeName>
        <fullName evidence="1">ATP-sulfurylase small subunit</fullName>
    </alternativeName>
    <alternativeName>
        <fullName evidence="1">Sulfate adenylate transferase</fullName>
        <shortName evidence="1">SAT</shortName>
    </alternativeName>
</protein>
<dbReference type="EC" id="2.7.7.4" evidence="1"/>
<dbReference type="EMBL" id="CP000891">
    <property type="protein sequence ID" value="ABX48138.1"/>
    <property type="molecule type" value="Genomic_DNA"/>
</dbReference>
<dbReference type="RefSeq" id="WP_012196743.1">
    <property type="nucleotide sequence ID" value="NC_009997.1"/>
</dbReference>
<dbReference type="SMR" id="A9L389"/>
<dbReference type="GeneID" id="11771261"/>
<dbReference type="KEGG" id="sbn:Sbal195_0962"/>
<dbReference type="HOGENOM" id="CLU_043026_0_0_6"/>
<dbReference type="UniPathway" id="UPA00140">
    <property type="reaction ID" value="UER00204"/>
</dbReference>
<dbReference type="Proteomes" id="UP000000770">
    <property type="component" value="Chromosome"/>
</dbReference>
<dbReference type="GO" id="GO:0005524">
    <property type="term" value="F:ATP binding"/>
    <property type="evidence" value="ECO:0007669"/>
    <property type="project" value="UniProtKB-KW"/>
</dbReference>
<dbReference type="GO" id="GO:0004781">
    <property type="term" value="F:sulfate adenylyltransferase (ATP) activity"/>
    <property type="evidence" value="ECO:0007669"/>
    <property type="project" value="UniProtKB-UniRule"/>
</dbReference>
<dbReference type="GO" id="GO:0070814">
    <property type="term" value="P:hydrogen sulfide biosynthetic process"/>
    <property type="evidence" value="ECO:0007669"/>
    <property type="project" value="UniProtKB-UniRule"/>
</dbReference>
<dbReference type="GO" id="GO:0000103">
    <property type="term" value="P:sulfate assimilation"/>
    <property type="evidence" value="ECO:0007669"/>
    <property type="project" value="UniProtKB-UniRule"/>
</dbReference>
<dbReference type="CDD" id="cd23946">
    <property type="entry name" value="Sulfate_adenylyltransferase_2"/>
    <property type="match status" value="1"/>
</dbReference>
<dbReference type="FunFam" id="3.40.50.620:FF:000002">
    <property type="entry name" value="Sulfate adenylyltransferase subunit 2"/>
    <property type="match status" value="1"/>
</dbReference>
<dbReference type="Gene3D" id="3.40.50.620">
    <property type="entry name" value="HUPs"/>
    <property type="match status" value="1"/>
</dbReference>
<dbReference type="HAMAP" id="MF_00064">
    <property type="entry name" value="Sulf_adenylyltr_sub2"/>
    <property type="match status" value="1"/>
</dbReference>
<dbReference type="InterPro" id="IPR002500">
    <property type="entry name" value="PAPS_reduct_dom"/>
</dbReference>
<dbReference type="InterPro" id="IPR014729">
    <property type="entry name" value="Rossmann-like_a/b/a_fold"/>
</dbReference>
<dbReference type="InterPro" id="IPR011784">
    <property type="entry name" value="SO4_adenylTrfase_ssu"/>
</dbReference>
<dbReference type="InterPro" id="IPR050128">
    <property type="entry name" value="Sulfate_adenylyltrnsfr_sub2"/>
</dbReference>
<dbReference type="NCBIfam" id="TIGR02039">
    <property type="entry name" value="CysD"/>
    <property type="match status" value="1"/>
</dbReference>
<dbReference type="NCBIfam" id="NF003587">
    <property type="entry name" value="PRK05253.1"/>
    <property type="match status" value="1"/>
</dbReference>
<dbReference type="NCBIfam" id="NF009214">
    <property type="entry name" value="PRK12563.1"/>
    <property type="match status" value="1"/>
</dbReference>
<dbReference type="PANTHER" id="PTHR43196">
    <property type="entry name" value="SULFATE ADENYLYLTRANSFERASE SUBUNIT 2"/>
    <property type="match status" value="1"/>
</dbReference>
<dbReference type="PANTHER" id="PTHR43196:SF1">
    <property type="entry name" value="SULFATE ADENYLYLTRANSFERASE SUBUNIT 2"/>
    <property type="match status" value="1"/>
</dbReference>
<dbReference type="Pfam" id="PF01507">
    <property type="entry name" value="PAPS_reduct"/>
    <property type="match status" value="1"/>
</dbReference>
<dbReference type="PIRSF" id="PIRSF002936">
    <property type="entry name" value="CysDAde_trans"/>
    <property type="match status" value="1"/>
</dbReference>
<dbReference type="SUPFAM" id="SSF52402">
    <property type="entry name" value="Adenine nucleotide alpha hydrolases-like"/>
    <property type="match status" value="1"/>
</dbReference>
<keyword id="KW-0067">ATP-binding</keyword>
<keyword id="KW-0547">Nucleotide-binding</keyword>
<keyword id="KW-0548">Nucleotidyltransferase</keyword>
<keyword id="KW-0808">Transferase</keyword>
<feature type="chain" id="PRO_1000075082" description="Sulfate adenylyltransferase subunit 2">
    <location>
        <begin position="1"/>
        <end position="302"/>
    </location>
</feature>
<feature type="region of interest" description="Disordered" evidence="2">
    <location>
        <begin position="280"/>
        <end position="302"/>
    </location>
</feature>
<comment type="function">
    <text evidence="1">With CysN forms the ATP sulfurylase (ATPS) that catalyzes the adenylation of sulfate producing adenosine 5'-phosphosulfate (APS) and diphosphate, the first enzymatic step in sulfur assimilation pathway. APS synthesis involves the formation of a high-energy phosphoric-sulfuric acid anhydride bond driven by GTP hydrolysis by CysN coupled to ATP hydrolysis by CysD.</text>
</comment>
<comment type="catalytic activity">
    <reaction evidence="1">
        <text>sulfate + ATP + H(+) = adenosine 5'-phosphosulfate + diphosphate</text>
        <dbReference type="Rhea" id="RHEA:18133"/>
        <dbReference type="ChEBI" id="CHEBI:15378"/>
        <dbReference type="ChEBI" id="CHEBI:16189"/>
        <dbReference type="ChEBI" id="CHEBI:30616"/>
        <dbReference type="ChEBI" id="CHEBI:33019"/>
        <dbReference type="ChEBI" id="CHEBI:58243"/>
        <dbReference type="EC" id="2.7.7.4"/>
    </reaction>
</comment>
<comment type="pathway">
    <text evidence="1">Sulfur metabolism; hydrogen sulfide biosynthesis; sulfite from sulfate: step 1/3.</text>
</comment>
<comment type="subunit">
    <text evidence="1">Heterodimer composed of CysD, the smaller subunit, and CysN.</text>
</comment>
<comment type="similarity">
    <text evidence="1">Belongs to the PAPS reductase family. CysD subfamily.</text>
</comment>
<name>CYSD_SHEB9</name>
<reference key="1">
    <citation type="submission" date="2007-11" db="EMBL/GenBank/DDBJ databases">
        <title>Complete sequence of chromosome of Shewanella baltica OS195.</title>
        <authorList>
            <consortium name="US DOE Joint Genome Institute"/>
            <person name="Copeland A."/>
            <person name="Lucas S."/>
            <person name="Lapidus A."/>
            <person name="Barry K."/>
            <person name="Glavina del Rio T."/>
            <person name="Dalin E."/>
            <person name="Tice H."/>
            <person name="Pitluck S."/>
            <person name="Chain P."/>
            <person name="Malfatti S."/>
            <person name="Shin M."/>
            <person name="Vergez L."/>
            <person name="Schmutz J."/>
            <person name="Larimer F."/>
            <person name="Land M."/>
            <person name="Hauser L."/>
            <person name="Kyrpides N."/>
            <person name="Kim E."/>
            <person name="Brettar I."/>
            <person name="Rodrigues J."/>
            <person name="Konstantinidis K."/>
            <person name="Klappenbach J."/>
            <person name="Hofle M."/>
            <person name="Tiedje J."/>
            <person name="Richardson P."/>
        </authorList>
    </citation>
    <scope>NUCLEOTIDE SEQUENCE [LARGE SCALE GENOMIC DNA]</scope>
    <source>
        <strain>OS195</strain>
    </source>
</reference>
<organism>
    <name type="scientific">Shewanella baltica (strain OS195)</name>
    <dbReference type="NCBI Taxonomy" id="399599"/>
    <lineage>
        <taxon>Bacteria</taxon>
        <taxon>Pseudomonadati</taxon>
        <taxon>Pseudomonadota</taxon>
        <taxon>Gammaproteobacteria</taxon>
        <taxon>Alteromonadales</taxon>
        <taxon>Shewanellaceae</taxon>
        <taxon>Shewanella</taxon>
    </lineage>
</organism>
<sequence length="302" mass="34929">MAGRELSHLQQLEAESIQIIREVAAEFDNPVMLYSIGKDSSVMLHLARKAFYPGKIPFPLLHVDTGWKFKEMIAFRDAQAKKFGFELLTHINPEGLAQGINPFDHGSAKHTDIMKTQGLKQALNQYGFDAAFGGARRDEEKSRAKERVYSFRDRHHRWDPKNQRPELWRTYNGAVNKGESIRVFPLSNWTELDIWQYIYQENIELVPLYFAAKRQVVERGGQLIMADDERMKLAEGEQIKEEVVRFRTLGCYPLTAAMHSEADSLEKIIEEMLLTRSSERQGRLIDSDQSASMEQKKRQGYF</sequence>
<proteinExistence type="inferred from homology"/>
<accession>A9L389</accession>